<gene>
    <name type="primary">odhB</name>
    <name type="synonym">sucB</name>
    <name type="ordered locus">MW1302</name>
</gene>
<evidence type="ECO:0000250" key="1"/>
<evidence type="ECO:0000250" key="2">
    <source>
        <dbReference type="UniProtKB" id="P0AFG6"/>
    </source>
</evidence>
<evidence type="ECO:0000255" key="3">
    <source>
        <dbReference type="PROSITE-ProRule" id="PRU01066"/>
    </source>
</evidence>
<evidence type="ECO:0000255" key="4">
    <source>
        <dbReference type="PROSITE-ProRule" id="PRU01170"/>
    </source>
</evidence>
<evidence type="ECO:0000256" key="5">
    <source>
        <dbReference type="SAM" id="MobiDB-lite"/>
    </source>
</evidence>
<evidence type="ECO:0000305" key="6"/>
<protein>
    <recommendedName>
        <fullName>Dihydrolipoyllysine-residue succinyltransferase component of 2-oxoglutarate dehydrogenase complex</fullName>
        <ecNumber evidence="2">2.3.1.61</ecNumber>
    </recommendedName>
    <alternativeName>
        <fullName>2-oxoglutarate dehydrogenase complex component E2</fullName>
        <shortName>OGDC-E2</shortName>
    </alternativeName>
    <alternativeName>
        <fullName>Dihydrolipoamide succinyltransferase component of 2-oxoglutarate dehydrogenase complex</fullName>
    </alternativeName>
</protein>
<name>ODO2_STAAW</name>
<keyword id="KW-0012">Acyltransferase</keyword>
<keyword id="KW-0450">Lipoyl</keyword>
<keyword id="KW-0808">Transferase</keyword>
<keyword id="KW-0816">Tricarboxylic acid cycle</keyword>
<reference key="1">
    <citation type="journal article" date="2002" name="Lancet">
        <title>Genome and virulence determinants of high virulence community-acquired MRSA.</title>
        <authorList>
            <person name="Baba T."/>
            <person name="Takeuchi F."/>
            <person name="Kuroda M."/>
            <person name="Yuzawa H."/>
            <person name="Aoki K."/>
            <person name="Oguchi A."/>
            <person name="Nagai Y."/>
            <person name="Iwama N."/>
            <person name="Asano K."/>
            <person name="Naimi T."/>
            <person name="Kuroda H."/>
            <person name="Cui L."/>
            <person name="Yamamoto K."/>
            <person name="Hiramatsu K."/>
        </authorList>
    </citation>
    <scope>NUCLEOTIDE SEQUENCE [LARGE SCALE GENOMIC DNA]</scope>
    <source>
        <strain>MW2</strain>
    </source>
</reference>
<sequence length="422" mass="46673">MPEVKVPELAESITEGTIAEWLKNVGDSVEKGEAILELETDKVNVEVVSEEAGVLSEQLASEGDTVEVGQAIAIIGEGSGNASKENSNDNTPQQNEETNNKKEETTNNSVDKAEVNQANDDNQQRINATPSARRYARENGVNLAEVSPKTNDVVRKEDIDKKQQAPASTQTTQQASAKEEKKYNQYPTKPVIREKMSRRKKTAAKKLLEVSNNTAMLTTFNEVDMTNVMELRKRKKEQFMKDHDGTKLGFMSFFTKASVAALKKYPEVNAEIDGDDMITKQYYDIGVAVSTDDGLLVPFVRDCDKKNFAEIEAEIANLAVKAREKKLGLDDMVNGSFTITNGGIFGSMMSTPIINGNQAAILGMHSIITRPIAIDQDTIENRPMMYIALSYDHRIIDGKEAVGFLKTIKELIENPEDLLLES</sequence>
<comment type="function">
    <text evidence="2">E2 component of the 2-oxoglutarate dehydrogenase (OGDH) complex which catalyzes the second step in the conversion of 2-oxoglutarate to succinyl-CoA and CO(2).</text>
</comment>
<comment type="catalytic activity">
    <reaction evidence="2">
        <text>N(6)-[(R)-dihydrolipoyl]-L-lysyl-[protein] + succinyl-CoA = N(6)-[(R)-S(8)-succinyldihydrolipoyl]-L-lysyl-[protein] + CoA</text>
        <dbReference type="Rhea" id="RHEA:15213"/>
        <dbReference type="Rhea" id="RHEA-COMP:10475"/>
        <dbReference type="Rhea" id="RHEA-COMP:20092"/>
        <dbReference type="ChEBI" id="CHEBI:57287"/>
        <dbReference type="ChEBI" id="CHEBI:57292"/>
        <dbReference type="ChEBI" id="CHEBI:83100"/>
        <dbReference type="ChEBI" id="CHEBI:83120"/>
        <dbReference type="EC" id="2.3.1.61"/>
    </reaction>
</comment>
<comment type="cofactor">
    <cofactor evidence="1">
        <name>(R)-lipoate</name>
        <dbReference type="ChEBI" id="CHEBI:83088"/>
    </cofactor>
    <text evidence="1">Binds 1 lipoyl cofactor covalently.</text>
</comment>
<comment type="pathway">
    <text>Amino-acid degradation; L-lysine degradation via saccharopine pathway; glutaryl-CoA from L-lysine: step 6/6.</text>
</comment>
<comment type="subunit">
    <text evidence="2">Forms a 24-polypeptide structural core with octahedral symmetry. Part of the 2-oxoglutarate dehydrogenase (OGDH) complex composed of E1 (2-oxoglutarate dehydrogenase), E2 (dihydrolipoamide succinyltransferase) and E3 (dihydrolipoamide dehydrogenase); the complex contains multiple copies of the three enzymatic components (E1, E2 and E3).</text>
</comment>
<comment type="similarity">
    <text evidence="6">Belongs to the 2-oxoacid dehydrogenase family.</text>
</comment>
<feature type="chain" id="PRO_0000288103" description="Dihydrolipoyllysine-residue succinyltransferase component of 2-oxoglutarate dehydrogenase complex">
    <location>
        <begin position="1"/>
        <end position="422"/>
    </location>
</feature>
<feature type="domain" description="Lipoyl-binding" evidence="3">
    <location>
        <begin position="1"/>
        <end position="76"/>
    </location>
</feature>
<feature type="domain" description="Peripheral subunit-binding (PSBD)" evidence="4">
    <location>
        <begin position="127"/>
        <end position="163"/>
    </location>
</feature>
<feature type="region of interest" description="Disordered" evidence="5">
    <location>
        <begin position="77"/>
        <end position="185"/>
    </location>
</feature>
<feature type="compositionally biased region" description="Polar residues" evidence="5">
    <location>
        <begin position="80"/>
        <end position="94"/>
    </location>
</feature>
<feature type="compositionally biased region" description="Polar residues" evidence="5">
    <location>
        <begin position="116"/>
        <end position="130"/>
    </location>
</feature>
<feature type="compositionally biased region" description="Basic and acidic residues" evidence="5">
    <location>
        <begin position="152"/>
        <end position="163"/>
    </location>
</feature>
<feature type="compositionally biased region" description="Low complexity" evidence="5">
    <location>
        <begin position="164"/>
        <end position="176"/>
    </location>
</feature>
<feature type="active site" evidence="2">
    <location>
        <position position="393"/>
    </location>
</feature>
<feature type="active site" evidence="2">
    <location>
        <position position="397"/>
    </location>
</feature>
<feature type="modified residue" description="N6-lipoyllysine" evidence="3">
    <location>
        <position position="42"/>
    </location>
</feature>
<accession>Q8NWR7</accession>
<dbReference type="EC" id="2.3.1.61" evidence="2"/>
<dbReference type="EMBL" id="BA000033">
    <property type="protein sequence ID" value="BAB95167.1"/>
    <property type="molecule type" value="Genomic_DNA"/>
</dbReference>
<dbReference type="RefSeq" id="WP_001115440.1">
    <property type="nucleotide sequence ID" value="NC_003923.1"/>
</dbReference>
<dbReference type="SMR" id="Q8NWR7"/>
<dbReference type="KEGG" id="sam:MW1302"/>
<dbReference type="HOGENOM" id="CLU_016733_0_0_9"/>
<dbReference type="UniPathway" id="UPA00868">
    <property type="reaction ID" value="UER00840"/>
</dbReference>
<dbReference type="GO" id="GO:0005829">
    <property type="term" value="C:cytosol"/>
    <property type="evidence" value="ECO:0007669"/>
    <property type="project" value="TreeGrafter"/>
</dbReference>
<dbReference type="GO" id="GO:0045252">
    <property type="term" value="C:oxoglutarate dehydrogenase complex"/>
    <property type="evidence" value="ECO:0007669"/>
    <property type="project" value="InterPro"/>
</dbReference>
<dbReference type="GO" id="GO:0004149">
    <property type="term" value="F:dihydrolipoyllysine-residue succinyltransferase activity"/>
    <property type="evidence" value="ECO:0007669"/>
    <property type="project" value="UniProtKB-EC"/>
</dbReference>
<dbReference type="GO" id="GO:0033512">
    <property type="term" value="P:L-lysine catabolic process to acetyl-CoA via saccharopine"/>
    <property type="evidence" value="ECO:0007669"/>
    <property type="project" value="UniProtKB-UniPathway"/>
</dbReference>
<dbReference type="GO" id="GO:0006099">
    <property type="term" value="P:tricarboxylic acid cycle"/>
    <property type="evidence" value="ECO:0007669"/>
    <property type="project" value="UniProtKB-KW"/>
</dbReference>
<dbReference type="CDD" id="cd06849">
    <property type="entry name" value="lipoyl_domain"/>
    <property type="match status" value="1"/>
</dbReference>
<dbReference type="FunFam" id="3.30.559.10:FF:000007">
    <property type="entry name" value="Dihydrolipoamide acetyltransferase component of pyruvate dehydrogenase complex"/>
    <property type="match status" value="1"/>
</dbReference>
<dbReference type="Gene3D" id="2.40.50.100">
    <property type="match status" value="1"/>
</dbReference>
<dbReference type="Gene3D" id="3.30.559.10">
    <property type="entry name" value="Chloramphenicol acetyltransferase-like domain"/>
    <property type="match status" value="1"/>
</dbReference>
<dbReference type="Gene3D" id="4.10.320.10">
    <property type="entry name" value="E3-binding domain"/>
    <property type="match status" value="1"/>
</dbReference>
<dbReference type="InterPro" id="IPR003016">
    <property type="entry name" value="2-oxoA_DH_lipoyl-BS"/>
</dbReference>
<dbReference type="InterPro" id="IPR050537">
    <property type="entry name" value="2-oxoacid_dehydrogenase"/>
</dbReference>
<dbReference type="InterPro" id="IPR001078">
    <property type="entry name" value="2-oxoacid_DH_actylTfrase"/>
</dbReference>
<dbReference type="InterPro" id="IPR000089">
    <property type="entry name" value="Biotin_lipoyl"/>
</dbReference>
<dbReference type="InterPro" id="IPR023213">
    <property type="entry name" value="CAT-like_dom_sf"/>
</dbReference>
<dbReference type="InterPro" id="IPR036625">
    <property type="entry name" value="E3-bd_dom_sf"/>
</dbReference>
<dbReference type="InterPro" id="IPR004167">
    <property type="entry name" value="PSBD"/>
</dbReference>
<dbReference type="InterPro" id="IPR011053">
    <property type="entry name" value="Single_hybrid_motif"/>
</dbReference>
<dbReference type="InterPro" id="IPR006255">
    <property type="entry name" value="SucB"/>
</dbReference>
<dbReference type="NCBIfam" id="NF004309">
    <property type="entry name" value="PRK05704.1"/>
    <property type="match status" value="1"/>
</dbReference>
<dbReference type="NCBIfam" id="TIGR01347">
    <property type="entry name" value="sucB"/>
    <property type="match status" value="1"/>
</dbReference>
<dbReference type="PANTHER" id="PTHR43416:SF5">
    <property type="entry name" value="DIHYDROLIPOYLLYSINE-RESIDUE SUCCINYLTRANSFERASE COMPONENT OF 2-OXOGLUTARATE DEHYDROGENASE COMPLEX, MITOCHONDRIAL"/>
    <property type="match status" value="1"/>
</dbReference>
<dbReference type="PANTHER" id="PTHR43416">
    <property type="entry name" value="DIHYDROLIPOYLLYSINE-RESIDUE SUCCINYLTRANSFERASE COMPONENT OF 2-OXOGLUTARATE DEHYDROGENASE COMPLEX, MITOCHONDRIAL-RELATED"/>
    <property type="match status" value="1"/>
</dbReference>
<dbReference type="Pfam" id="PF00198">
    <property type="entry name" value="2-oxoacid_dh"/>
    <property type="match status" value="1"/>
</dbReference>
<dbReference type="Pfam" id="PF00364">
    <property type="entry name" value="Biotin_lipoyl"/>
    <property type="match status" value="1"/>
</dbReference>
<dbReference type="Pfam" id="PF02817">
    <property type="entry name" value="E3_binding"/>
    <property type="match status" value="1"/>
</dbReference>
<dbReference type="SUPFAM" id="SSF52777">
    <property type="entry name" value="CoA-dependent acyltransferases"/>
    <property type="match status" value="1"/>
</dbReference>
<dbReference type="SUPFAM" id="SSF51230">
    <property type="entry name" value="Single hybrid motif"/>
    <property type="match status" value="1"/>
</dbReference>
<dbReference type="PROSITE" id="PS50968">
    <property type="entry name" value="BIOTINYL_LIPOYL"/>
    <property type="match status" value="1"/>
</dbReference>
<dbReference type="PROSITE" id="PS00189">
    <property type="entry name" value="LIPOYL"/>
    <property type="match status" value="1"/>
</dbReference>
<dbReference type="PROSITE" id="PS51826">
    <property type="entry name" value="PSBD"/>
    <property type="match status" value="1"/>
</dbReference>
<proteinExistence type="inferred from homology"/>
<organism>
    <name type="scientific">Staphylococcus aureus (strain MW2)</name>
    <dbReference type="NCBI Taxonomy" id="196620"/>
    <lineage>
        <taxon>Bacteria</taxon>
        <taxon>Bacillati</taxon>
        <taxon>Bacillota</taxon>
        <taxon>Bacilli</taxon>
        <taxon>Bacillales</taxon>
        <taxon>Staphylococcaceae</taxon>
        <taxon>Staphylococcus</taxon>
    </lineage>
</organism>